<organism>
    <name type="scientific">Thermosipho melanesiensis (strain DSM 12029 / CIP 104789 / BI429)</name>
    <dbReference type="NCBI Taxonomy" id="391009"/>
    <lineage>
        <taxon>Bacteria</taxon>
        <taxon>Thermotogati</taxon>
        <taxon>Thermotogota</taxon>
        <taxon>Thermotogae</taxon>
        <taxon>Thermotogales</taxon>
        <taxon>Fervidobacteriaceae</taxon>
        <taxon>Thermosipho</taxon>
    </lineage>
</organism>
<keyword id="KW-0227">DNA damage</keyword>
<keyword id="KW-0234">DNA repair</keyword>
<proteinExistence type="inferred from homology"/>
<reference key="1">
    <citation type="submission" date="2007-05" db="EMBL/GenBank/DDBJ databases">
        <title>Complete sequence of Thermosipho melanesiensis BI429.</title>
        <authorList>
            <consortium name="US DOE Joint Genome Institute"/>
            <person name="Copeland A."/>
            <person name="Lucas S."/>
            <person name="Lapidus A."/>
            <person name="Barry K."/>
            <person name="Glavina del Rio T."/>
            <person name="Dalin E."/>
            <person name="Tice H."/>
            <person name="Pitluck S."/>
            <person name="Chertkov O."/>
            <person name="Brettin T."/>
            <person name="Bruce D."/>
            <person name="Detter J.C."/>
            <person name="Han C."/>
            <person name="Schmutz J."/>
            <person name="Larimer F."/>
            <person name="Land M."/>
            <person name="Hauser L."/>
            <person name="Kyrpides N."/>
            <person name="Mikhailova N."/>
            <person name="Nelson K."/>
            <person name="Gogarten J.P."/>
            <person name="Noll K."/>
            <person name="Richardson P."/>
        </authorList>
    </citation>
    <scope>NUCLEOTIDE SEQUENCE [LARGE SCALE GENOMIC DNA]</scope>
    <source>
        <strain>DSM 12029 / CIP 104789 / BI429</strain>
    </source>
</reference>
<comment type="function">
    <text evidence="1">This protein is involved in the repair of mismatches in DNA. It is required for dam-dependent methyl-directed DNA mismatch repair. May act as a 'molecular matchmaker', a protein that promotes the formation of a stable complex between two or more DNA-binding proteins in an ATP-dependent manner without itself being part of a final effector complex.</text>
</comment>
<comment type="similarity">
    <text evidence="1">Belongs to the DNA mismatch repair MutL/HexB family.</text>
</comment>
<name>MUTL_THEM4</name>
<accession>A6LL30</accession>
<sequence>MGKIKKLDKNVVSRIAAGEAVAGPFSVVKELVENALDASATKIEIEILNGGKSYIKVKDNGEGMSRDDLLLSIEEHTTSKIEDFEDIYNLYSFGFRGEALSSISKVSKLVITSNDGKESNRLEVIGGKIKDIKEYPTSEKGTIVEVYDLFFNVPARRKFLKSDNVEKRYVVEYVEKFLLGNPDVEIVLKSDGEVVYNAVKGNLEDRFRLIFPEVREFTEVSGKYVKGIISSPSYYRNNRTGQIFFVQKRFVIDKMLYYIFETGYGEALLKHPYGVLFIEVPPRFVDVNVHPQKLEVKFSNPNVIYSDITRTVREGIKKFVSKKIFVKKEQNTVNENKLNYAYGPKSKPFQTNIEKNMLFNVEKKQLEVKRDIVVLKKRYVLFESNDGIYIMDFHAAHERILYDNIIKQLDEKVERLDLMIPIEIKIGKSFLQIAEGRKEDFKRFGFNIKIDKEKIIVLSIPSFIKPSDVVEVLMEILDEYRILGENPKSMKHIIADKACKKAVKTGYDILESEAKQLVEEVLKRGLTTCPHGRPLFLKITYKELDSFFERT</sequence>
<evidence type="ECO:0000255" key="1">
    <source>
        <dbReference type="HAMAP-Rule" id="MF_00149"/>
    </source>
</evidence>
<feature type="chain" id="PRO_1000192188" description="DNA mismatch repair protein MutL">
    <location>
        <begin position="1"/>
        <end position="551"/>
    </location>
</feature>
<dbReference type="EMBL" id="CP000716">
    <property type="protein sequence ID" value="ABR30631.1"/>
    <property type="molecule type" value="Genomic_DNA"/>
</dbReference>
<dbReference type="RefSeq" id="WP_012056992.1">
    <property type="nucleotide sequence ID" value="NC_009616.1"/>
</dbReference>
<dbReference type="SMR" id="A6LL30"/>
<dbReference type="STRING" id="391009.Tmel_0769"/>
<dbReference type="KEGG" id="tme:Tmel_0769"/>
<dbReference type="eggNOG" id="COG0323">
    <property type="taxonomic scope" value="Bacteria"/>
</dbReference>
<dbReference type="HOGENOM" id="CLU_004131_4_3_0"/>
<dbReference type="OrthoDB" id="9763467at2"/>
<dbReference type="Proteomes" id="UP000001110">
    <property type="component" value="Chromosome"/>
</dbReference>
<dbReference type="GO" id="GO:0032300">
    <property type="term" value="C:mismatch repair complex"/>
    <property type="evidence" value="ECO:0007669"/>
    <property type="project" value="InterPro"/>
</dbReference>
<dbReference type="GO" id="GO:0005524">
    <property type="term" value="F:ATP binding"/>
    <property type="evidence" value="ECO:0007669"/>
    <property type="project" value="InterPro"/>
</dbReference>
<dbReference type="GO" id="GO:0016887">
    <property type="term" value="F:ATP hydrolysis activity"/>
    <property type="evidence" value="ECO:0007669"/>
    <property type="project" value="InterPro"/>
</dbReference>
<dbReference type="GO" id="GO:0140664">
    <property type="term" value="F:ATP-dependent DNA damage sensor activity"/>
    <property type="evidence" value="ECO:0007669"/>
    <property type="project" value="InterPro"/>
</dbReference>
<dbReference type="GO" id="GO:0030983">
    <property type="term" value="F:mismatched DNA binding"/>
    <property type="evidence" value="ECO:0007669"/>
    <property type="project" value="InterPro"/>
</dbReference>
<dbReference type="GO" id="GO:0006298">
    <property type="term" value="P:mismatch repair"/>
    <property type="evidence" value="ECO:0007669"/>
    <property type="project" value="UniProtKB-UniRule"/>
</dbReference>
<dbReference type="CDD" id="cd16926">
    <property type="entry name" value="HATPase_MutL-MLH-PMS-like"/>
    <property type="match status" value="1"/>
</dbReference>
<dbReference type="CDD" id="cd00782">
    <property type="entry name" value="MutL_Trans"/>
    <property type="match status" value="1"/>
</dbReference>
<dbReference type="FunFam" id="3.30.565.10:FF:000003">
    <property type="entry name" value="DNA mismatch repair endonuclease MutL"/>
    <property type="match status" value="1"/>
</dbReference>
<dbReference type="Gene3D" id="3.30.230.10">
    <property type="match status" value="1"/>
</dbReference>
<dbReference type="Gene3D" id="3.30.565.10">
    <property type="entry name" value="Histidine kinase-like ATPase, C-terminal domain"/>
    <property type="match status" value="1"/>
</dbReference>
<dbReference type="Gene3D" id="3.30.1540.20">
    <property type="entry name" value="MutL, C-terminal domain, dimerisation subdomain"/>
    <property type="match status" value="1"/>
</dbReference>
<dbReference type="Gene3D" id="3.30.1370.100">
    <property type="entry name" value="MutL, C-terminal domain, regulatory subdomain"/>
    <property type="match status" value="1"/>
</dbReference>
<dbReference type="HAMAP" id="MF_00149">
    <property type="entry name" value="DNA_mis_repair"/>
    <property type="match status" value="1"/>
</dbReference>
<dbReference type="InterPro" id="IPR014762">
    <property type="entry name" value="DNA_mismatch_repair_CS"/>
</dbReference>
<dbReference type="InterPro" id="IPR020667">
    <property type="entry name" value="DNA_mismatch_repair_MutL"/>
</dbReference>
<dbReference type="InterPro" id="IPR013507">
    <property type="entry name" value="DNA_mismatch_S5_2-like"/>
</dbReference>
<dbReference type="InterPro" id="IPR036890">
    <property type="entry name" value="HATPase_C_sf"/>
</dbReference>
<dbReference type="InterPro" id="IPR002099">
    <property type="entry name" value="MutL/Mlh/PMS"/>
</dbReference>
<dbReference type="InterPro" id="IPR038973">
    <property type="entry name" value="MutL/Mlh/Pms-like"/>
</dbReference>
<dbReference type="InterPro" id="IPR014790">
    <property type="entry name" value="MutL_C"/>
</dbReference>
<dbReference type="InterPro" id="IPR042120">
    <property type="entry name" value="MutL_C_dimsub"/>
</dbReference>
<dbReference type="InterPro" id="IPR042121">
    <property type="entry name" value="MutL_C_regsub"/>
</dbReference>
<dbReference type="InterPro" id="IPR037198">
    <property type="entry name" value="MutL_C_sf"/>
</dbReference>
<dbReference type="InterPro" id="IPR020568">
    <property type="entry name" value="Ribosomal_Su5_D2-typ_SF"/>
</dbReference>
<dbReference type="InterPro" id="IPR014721">
    <property type="entry name" value="Ribsml_uS5_D2-typ_fold_subgr"/>
</dbReference>
<dbReference type="NCBIfam" id="TIGR00585">
    <property type="entry name" value="mutl"/>
    <property type="match status" value="1"/>
</dbReference>
<dbReference type="PANTHER" id="PTHR10073">
    <property type="entry name" value="DNA MISMATCH REPAIR PROTEIN MLH, PMS, MUTL"/>
    <property type="match status" value="1"/>
</dbReference>
<dbReference type="PANTHER" id="PTHR10073:SF12">
    <property type="entry name" value="DNA MISMATCH REPAIR PROTEIN MLH1"/>
    <property type="match status" value="1"/>
</dbReference>
<dbReference type="Pfam" id="PF01119">
    <property type="entry name" value="DNA_mis_repair"/>
    <property type="match status" value="1"/>
</dbReference>
<dbReference type="Pfam" id="PF13589">
    <property type="entry name" value="HATPase_c_3"/>
    <property type="match status" value="1"/>
</dbReference>
<dbReference type="Pfam" id="PF08676">
    <property type="entry name" value="MutL_C"/>
    <property type="match status" value="1"/>
</dbReference>
<dbReference type="SMART" id="SM01340">
    <property type="entry name" value="DNA_mis_repair"/>
    <property type="match status" value="1"/>
</dbReference>
<dbReference type="SMART" id="SM00853">
    <property type="entry name" value="MutL_C"/>
    <property type="match status" value="1"/>
</dbReference>
<dbReference type="SUPFAM" id="SSF55874">
    <property type="entry name" value="ATPase domain of HSP90 chaperone/DNA topoisomerase II/histidine kinase"/>
    <property type="match status" value="1"/>
</dbReference>
<dbReference type="SUPFAM" id="SSF118116">
    <property type="entry name" value="DNA mismatch repair protein MutL"/>
    <property type="match status" value="1"/>
</dbReference>
<dbReference type="SUPFAM" id="SSF54211">
    <property type="entry name" value="Ribosomal protein S5 domain 2-like"/>
    <property type="match status" value="1"/>
</dbReference>
<dbReference type="PROSITE" id="PS00058">
    <property type="entry name" value="DNA_MISMATCH_REPAIR_1"/>
    <property type="match status" value="1"/>
</dbReference>
<protein>
    <recommendedName>
        <fullName evidence="1">DNA mismatch repair protein MutL</fullName>
    </recommendedName>
</protein>
<gene>
    <name evidence="1" type="primary">mutL</name>
    <name type="ordered locus">Tmel_0769</name>
</gene>